<keyword id="KW-0067">ATP-binding</keyword>
<keyword id="KW-0418">Kinase</keyword>
<keyword id="KW-0545">Nucleotide biosynthesis</keyword>
<keyword id="KW-0547">Nucleotide-binding</keyword>
<keyword id="KW-1185">Reference proteome</keyword>
<keyword id="KW-0808">Transferase</keyword>
<feature type="chain" id="PRO_1000123598" description="Thymidylate kinase">
    <location>
        <begin position="1"/>
        <end position="204"/>
    </location>
</feature>
<feature type="binding site" evidence="1">
    <location>
        <begin position="12"/>
        <end position="19"/>
    </location>
    <ligand>
        <name>ATP</name>
        <dbReference type="ChEBI" id="CHEBI:30616"/>
    </ligand>
</feature>
<organism>
    <name type="scientific">Thiobacillus denitrificans (strain ATCC 25259 / T1)</name>
    <dbReference type="NCBI Taxonomy" id="292415"/>
    <lineage>
        <taxon>Bacteria</taxon>
        <taxon>Pseudomonadati</taxon>
        <taxon>Pseudomonadota</taxon>
        <taxon>Betaproteobacteria</taxon>
        <taxon>Nitrosomonadales</taxon>
        <taxon>Thiobacillaceae</taxon>
        <taxon>Thiobacillus</taxon>
    </lineage>
</organism>
<dbReference type="EC" id="2.7.4.9" evidence="1"/>
<dbReference type="EMBL" id="CP000116">
    <property type="protein sequence ID" value="AAZ97496.1"/>
    <property type="molecule type" value="Genomic_DNA"/>
</dbReference>
<dbReference type="RefSeq" id="WP_011312055.1">
    <property type="nucleotide sequence ID" value="NC_007404.1"/>
</dbReference>
<dbReference type="SMR" id="Q3SIM9"/>
<dbReference type="STRING" id="292415.Tbd_1543"/>
<dbReference type="KEGG" id="tbd:Tbd_1543"/>
<dbReference type="eggNOG" id="COG0125">
    <property type="taxonomic scope" value="Bacteria"/>
</dbReference>
<dbReference type="HOGENOM" id="CLU_049131_0_2_4"/>
<dbReference type="OrthoDB" id="9774907at2"/>
<dbReference type="Proteomes" id="UP000008291">
    <property type="component" value="Chromosome"/>
</dbReference>
<dbReference type="GO" id="GO:0005829">
    <property type="term" value="C:cytosol"/>
    <property type="evidence" value="ECO:0007669"/>
    <property type="project" value="TreeGrafter"/>
</dbReference>
<dbReference type="GO" id="GO:0005524">
    <property type="term" value="F:ATP binding"/>
    <property type="evidence" value="ECO:0007669"/>
    <property type="project" value="UniProtKB-UniRule"/>
</dbReference>
<dbReference type="GO" id="GO:0004798">
    <property type="term" value="F:dTMP kinase activity"/>
    <property type="evidence" value="ECO:0007669"/>
    <property type="project" value="UniProtKB-UniRule"/>
</dbReference>
<dbReference type="GO" id="GO:0006233">
    <property type="term" value="P:dTDP biosynthetic process"/>
    <property type="evidence" value="ECO:0007669"/>
    <property type="project" value="InterPro"/>
</dbReference>
<dbReference type="GO" id="GO:0006235">
    <property type="term" value="P:dTTP biosynthetic process"/>
    <property type="evidence" value="ECO:0007669"/>
    <property type="project" value="UniProtKB-UniRule"/>
</dbReference>
<dbReference type="GO" id="GO:0006227">
    <property type="term" value="P:dUDP biosynthetic process"/>
    <property type="evidence" value="ECO:0007669"/>
    <property type="project" value="TreeGrafter"/>
</dbReference>
<dbReference type="CDD" id="cd01672">
    <property type="entry name" value="TMPK"/>
    <property type="match status" value="1"/>
</dbReference>
<dbReference type="FunFam" id="3.40.50.300:FF:000225">
    <property type="entry name" value="Thymidylate kinase"/>
    <property type="match status" value="1"/>
</dbReference>
<dbReference type="Gene3D" id="3.40.50.300">
    <property type="entry name" value="P-loop containing nucleotide triphosphate hydrolases"/>
    <property type="match status" value="1"/>
</dbReference>
<dbReference type="HAMAP" id="MF_00165">
    <property type="entry name" value="Thymidylate_kinase"/>
    <property type="match status" value="1"/>
</dbReference>
<dbReference type="InterPro" id="IPR027417">
    <property type="entry name" value="P-loop_NTPase"/>
</dbReference>
<dbReference type="InterPro" id="IPR039430">
    <property type="entry name" value="Thymidylate_kin-like_dom"/>
</dbReference>
<dbReference type="InterPro" id="IPR018094">
    <property type="entry name" value="Thymidylate_kinase"/>
</dbReference>
<dbReference type="NCBIfam" id="TIGR00041">
    <property type="entry name" value="DTMP_kinase"/>
    <property type="match status" value="1"/>
</dbReference>
<dbReference type="PANTHER" id="PTHR10344">
    <property type="entry name" value="THYMIDYLATE KINASE"/>
    <property type="match status" value="1"/>
</dbReference>
<dbReference type="PANTHER" id="PTHR10344:SF4">
    <property type="entry name" value="UMP-CMP KINASE 2, MITOCHONDRIAL"/>
    <property type="match status" value="1"/>
</dbReference>
<dbReference type="Pfam" id="PF02223">
    <property type="entry name" value="Thymidylate_kin"/>
    <property type="match status" value="1"/>
</dbReference>
<dbReference type="SUPFAM" id="SSF52540">
    <property type="entry name" value="P-loop containing nucleoside triphosphate hydrolases"/>
    <property type="match status" value="1"/>
</dbReference>
<name>KTHY_THIDA</name>
<proteinExistence type="inferred from homology"/>
<accession>Q3SIM9</accession>
<sequence>MSLPGKFITLEGVDGAGKSTHVGFVAEWLRGQGREVIVTREPGGTALGETLRELLLHREMAADTELLLMFAARQQHLAELILPALARGAWVVSDRFTDASYAYQCGGRRIAAERIAALEDWVQRGFAPDLTLLFDVPPAVAEERRSSVRAADRFEQEAGSFFARVRDAYLVRARAEPHRIHVLDARQTIDAVQAEIARLLQDLT</sequence>
<protein>
    <recommendedName>
        <fullName evidence="1">Thymidylate kinase</fullName>
        <ecNumber evidence="1">2.7.4.9</ecNumber>
    </recommendedName>
    <alternativeName>
        <fullName evidence="1">dTMP kinase</fullName>
    </alternativeName>
</protein>
<comment type="function">
    <text evidence="1">Phosphorylation of dTMP to form dTDP in both de novo and salvage pathways of dTTP synthesis.</text>
</comment>
<comment type="catalytic activity">
    <reaction evidence="1">
        <text>dTMP + ATP = dTDP + ADP</text>
        <dbReference type="Rhea" id="RHEA:13517"/>
        <dbReference type="ChEBI" id="CHEBI:30616"/>
        <dbReference type="ChEBI" id="CHEBI:58369"/>
        <dbReference type="ChEBI" id="CHEBI:63528"/>
        <dbReference type="ChEBI" id="CHEBI:456216"/>
        <dbReference type="EC" id="2.7.4.9"/>
    </reaction>
</comment>
<comment type="similarity">
    <text evidence="1">Belongs to the thymidylate kinase family.</text>
</comment>
<reference key="1">
    <citation type="journal article" date="2006" name="J. Bacteriol.">
        <title>The genome sequence of the obligately chemolithoautotrophic, facultatively anaerobic bacterium Thiobacillus denitrificans.</title>
        <authorList>
            <person name="Beller H.R."/>
            <person name="Chain P.S."/>
            <person name="Letain T.E."/>
            <person name="Chakicherla A."/>
            <person name="Larimer F.W."/>
            <person name="Richardson P.M."/>
            <person name="Coleman M.A."/>
            <person name="Wood A.P."/>
            <person name="Kelly D.P."/>
        </authorList>
    </citation>
    <scope>NUCLEOTIDE SEQUENCE [LARGE SCALE GENOMIC DNA]</scope>
    <source>
        <strain>ATCC 25259 / T1</strain>
    </source>
</reference>
<evidence type="ECO:0000255" key="1">
    <source>
        <dbReference type="HAMAP-Rule" id="MF_00165"/>
    </source>
</evidence>
<gene>
    <name evidence="1" type="primary">tmk</name>
    <name type="ordered locus">Tbd_1543</name>
</gene>